<dbReference type="EMBL" id="AM933172">
    <property type="protein sequence ID" value="CAR32254.1"/>
    <property type="molecule type" value="Genomic_DNA"/>
</dbReference>
<dbReference type="RefSeq" id="WP_001518103.1">
    <property type="nucleotide sequence ID" value="NC_011294.1"/>
</dbReference>
<dbReference type="SMR" id="B5QWE8"/>
<dbReference type="KEGG" id="set:SEN0668"/>
<dbReference type="HOGENOM" id="CLU_077094_2_0_6"/>
<dbReference type="Proteomes" id="UP000000613">
    <property type="component" value="Chromosome"/>
</dbReference>
<dbReference type="GO" id="GO:0005886">
    <property type="term" value="C:plasma membrane"/>
    <property type="evidence" value="ECO:0007669"/>
    <property type="project" value="UniProtKB-SubCell"/>
</dbReference>
<dbReference type="GO" id="GO:0005524">
    <property type="term" value="F:ATP binding"/>
    <property type="evidence" value="ECO:0007669"/>
    <property type="project" value="UniProtKB-UniRule"/>
</dbReference>
<dbReference type="GO" id="GO:0008556">
    <property type="term" value="F:P-type potassium transmembrane transporter activity"/>
    <property type="evidence" value="ECO:0007669"/>
    <property type="project" value="InterPro"/>
</dbReference>
<dbReference type="HAMAP" id="MF_00276">
    <property type="entry name" value="KdpC"/>
    <property type="match status" value="1"/>
</dbReference>
<dbReference type="InterPro" id="IPR003820">
    <property type="entry name" value="KdpC"/>
</dbReference>
<dbReference type="NCBIfam" id="TIGR00681">
    <property type="entry name" value="kdpC"/>
    <property type="match status" value="1"/>
</dbReference>
<dbReference type="NCBIfam" id="NF001454">
    <property type="entry name" value="PRK00315.1"/>
    <property type="match status" value="1"/>
</dbReference>
<dbReference type="PANTHER" id="PTHR30042">
    <property type="entry name" value="POTASSIUM-TRANSPORTING ATPASE C CHAIN"/>
    <property type="match status" value="1"/>
</dbReference>
<dbReference type="PANTHER" id="PTHR30042:SF2">
    <property type="entry name" value="POTASSIUM-TRANSPORTING ATPASE KDPC SUBUNIT"/>
    <property type="match status" value="1"/>
</dbReference>
<dbReference type="Pfam" id="PF02669">
    <property type="entry name" value="KdpC"/>
    <property type="match status" value="1"/>
</dbReference>
<dbReference type="PIRSF" id="PIRSF001296">
    <property type="entry name" value="K_ATPase_KdpC"/>
    <property type="match status" value="1"/>
</dbReference>
<keyword id="KW-0067">ATP-binding</keyword>
<keyword id="KW-0997">Cell inner membrane</keyword>
<keyword id="KW-1003">Cell membrane</keyword>
<keyword id="KW-0406">Ion transport</keyword>
<keyword id="KW-0472">Membrane</keyword>
<keyword id="KW-0547">Nucleotide-binding</keyword>
<keyword id="KW-0630">Potassium</keyword>
<keyword id="KW-0633">Potassium transport</keyword>
<keyword id="KW-0812">Transmembrane</keyword>
<keyword id="KW-1133">Transmembrane helix</keyword>
<keyword id="KW-0813">Transport</keyword>
<accession>B5QWE8</accession>
<reference key="1">
    <citation type="journal article" date="2008" name="Genome Res.">
        <title>Comparative genome analysis of Salmonella enteritidis PT4 and Salmonella gallinarum 287/91 provides insights into evolutionary and host adaptation pathways.</title>
        <authorList>
            <person name="Thomson N.R."/>
            <person name="Clayton D.J."/>
            <person name="Windhorst D."/>
            <person name="Vernikos G."/>
            <person name="Davidson S."/>
            <person name="Churcher C."/>
            <person name="Quail M.A."/>
            <person name="Stevens M."/>
            <person name="Jones M.A."/>
            <person name="Watson M."/>
            <person name="Barron A."/>
            <person name="Layton A."/>
            <person name="Pickard D."/>
            <person name="Kingsley R.A."/>
            <person name="Bignell A."/>
            <person name="Clark L."/>
            <person name="Harris B."/>
            <person name="Ormond D."/>
            <person name="Abdellah Z."/>
            <person name="Brooks K."/>
            <person name="Cherevach I."/>
            <person name="Chillingworth T."/>
            <person name="Woodward J."/>
            <person name="Norberczak H."/>
            <person name="Lord A."/>
            <person name="Arrowsmith C."/>
            <person name="Jagels K."/>
            <person name="Moule S."/>
            <person name="Mungall K."/>
            <person name="Saunders M."/>
            <person name="Whitehead S."/>
            <person name="Chabalgoity J.A."/>
            <person name="Maskell D."/>
            <person name="Humphreys T."/>
            <person name="Roberts M."/>
            <person name="Barrow P.A."/>
            <person name="Dougan G."/>
            <person name="Parkhill J."/>
        </authorList>
    </citation>
    <scope>NUCLEOTIDE SEQUENCE [LARGE SCALE GENOMIC DNA]</scope>
    <source>
        <strain>P125109</strain>
    </source>
</reference>
<organism>
    <name type="scientific">Salmonella enteritidis PT4 (strain P125109)</name>
    <dbReference type="NCBI Taxonomy" id="550537"/>
    <lineage>
        <taxon>Bacteria</taxon>
        <taxon>Pseudomonadati</taxon>
        <taxon>Pseudomonadota</taxon>
        <taxon>Gammaproteobacteria</taxon>
        <taxon>Enterobacterales</taxon>
        <taxon>Enterobacteriaceae</taxon>
        <taxon>Salmonella</taxon>
    </lineage>
</organism>
<comment type="function">
    <text evidence="1">Part of the high-affinity ATP-driven potassium transport (or Kdp) system, which catalyzes the hydrolysis of ATP coupled with the electrogenic transport of potassium into the cytoplasm. This subunit acts as a catalytic chaperone that increases the ATP-binding affinity of the ATP-hydrolyzing subunit KdpB by the formation of a transient KdpB/KdpC/ATP ternary complex.</text>
</comment>
<comment type="subunit">
    <text evidence="1">The system is composed of three essential subunits: KdpA, KdpB and KdpC.</text>
</comment>
<comment type="subcellular location">
    <subcellularLocation>
        <location evidence="1">Cell inner membrane</location>
        <topology evidence="1">Single-pass membrane protein</topology>
    </subcellularLocation>
</comment>
<comment type="similarity">
    <text evidence="1">Belongs to the KdpC family.</text>
</comment>
<sequence>MIGLRPAFSTMLFLLLLTGGVYPLLTTALGQWWFPWQANGSLIHKDNVIRGSALIGQSFTAAGYFHGRPSATADTPYNPLASGGSNLAASNPELDAQIQSRVAALRAANPQASSAVPVELATASASGLDNNLTPGAAAWQIPRVAAARQLPVEQVAQLVAEYTHRPLARFLGQPVVNIVELNLALDALQGHRAK</sequence>
<name>KDPC_SALEP</name>
<protein>
    <recommendedName>
        <fullName evidence="1">Potassium-transporting ATPase KdpC subunit</fullName>
    </recommendedName>
    <alternativeName>
        <fullName evidence="1">ATP phosphohydrolase [potassium-transporting] C chain</fullName>
    </alternativeName>
    <alternativeName>
        <fullName evidence="1">Potassium-binding and translocating subunit C</fullName>
    </alternativeName>
    <alternativeName>
        <fullName evidence="1">Potassium-translocating ATPase C chain</fullName>
    </alternativeName>
</protein>
<gene>
    <name evidence="1" type="primary">kdpC</name>
    <name type="ordered locus">SEN0668</name>
</gene>
<feature type="chain" id="PRO_1000114739" description="Potassium-transporting ATPase KdpC subunit">
    <location>
        <begin position="1"/>
        <end position="194"/>
    </location>
</feature>
<feature type="transmembrane region" description="Helical" evidence="1">
    <location>
        <begin position="12"/>
        <end position="34"/>
    </location>
</feature>
<proteinExistence type="inferred from homology"/>
<evidence type="ECO:0000255" key="1">
    <source>
        <dbReference type="HAMAP-Rule" id="MF_00276"/>
    </source>
</evidence>